<proteinExistence type="evidence at transcript level"/>
<dbReference type="EMBL" id="DQ995336">
    <property type="protein sequence ID" value="ABJ97690.1"/>
    <property type="molecule type" value="mRNA"/>
</dbReference>
<dbReference type="SMR" id="M1CZC0"/>
<dbReference type="FunCoup" id="M1CZC0">
    <property type="interactions" value="3330"/>
</dbReference>
<dbReference type="STRING" id="4113.M1CZC0"/>
<dbReference type="MEROPS" id="M24.973"/>
<dbReference type="PaxDb" id="4113-PGSC0003DMT400078068"/>
<dbReference type="EnsemblPlants" id="PGSC0003DMT400078068">
    <property type="protein sequence ID" value="PGSC0003DMT400078068"/>
    <property type="gene ID" value="PGSC0003DMG400030365"/>
</dbReference>
<dbReference type="Gramene" id="PGSC0003DMT400078068">
    <property type="protein sequence ID" value="PGSC0003DMT400078068"/>
    <property type="gene ID" value="PGSC0003DMG400030365"/>
</dbReference>
<dbReference type="KEGG" id="sot:102577813"/>
<dbReference type="eggNOG" id="KOG2776">
    <property type="taxonomic scope" value="Eukaryota"/>
</dbReference>
<dbReference type="HOGENOM" id="CLU_041451_2_0_1"/>
<dbReference type="InParanoid" id="M1CZC0"/>
<dbReference type="OMA" id="SRMFYSE"/>
<dbReference type="OrthoDB" id="5876363at2759"/>
<dbReference type="Proteomes" id="UP000011115">
    <property type="component" value="Unassembled WGS sequence"/>
</dbReference>
<dbReference type="GO" id="GO:0005634">
    <property type="term" value="C:nucleus"/>
    <property type="evidence" value="ECO:0000250"/>
    <property type="project" value="UniProtKB"/>
</dbReference>
<dbReference type="GO" id="GO:1990904">
    <property type="term" value="C:ribonucleoprotein complex"/>
    <property type="evidence" value="ECO:0007669"/>
    <property type="project" value="UniProtKB-KW"/>
</dbReference>
<dbReference type="GO" id="GO:0003723">
    <property type="term" value="F:RNA binding"/>
    <property type="evidence" value="ECO:0007669"/>
    <property type="project" value="UniProtKB-KW"/>
</dbReference>
<dbReference type="GO" id="GO:0009734">
    <property type="term" value="P:auxin-activated signaling pathway"/>
    <property type="evidence" value="ECO:0000315"/>
    <property type="project" value="UniProtKB"/>
</dbReference>
<dbReference type="GO" id="GO:0044843">
    <property type="term" value="P:cell cycle G1/S phase transition"/>
    <property type="evidence" value="ECO:0000250"/>
    <property type="project" value="UniProtKB"/>
</dbReference>
<dbReference type="GO" id="GO:0051302">
    <property type="term" value="P:regulation of cell division"/>
    <property type="evidence" value="ECO:0000315"/>
    <property type="project" value="UniProtKB"/>
</dbReference>
<dbReference type="GO" id="GO:0001558">
    <property type="term" value="P:regulation of cell growth"/>
    <property type="evidence" value="ECO:0000315"/>
    <property type="project" value="UniProtKB"/>
</dbReference>
<dbReference type="GO" id="GO:0006364">
    <property type="term" value="P:rRNA processing"/>
    <property type="evidence" value="ECO:0007669"/>
    <property type="project" value="UniProtKB-KW"/>
</dbReference>
<dbReference type="CDD" id="cd01089">
    <property type="entry name" value="PA2G4-like"/>
    <property type="match status" value="1"/>
</dbReference>
<dbReference type="FunFam" id="3.90.230.10:FF:000012">
    <property type="entry name" value="ERBB-3 BINDING PROTEIN 1"/>
    <property type="match status" value="1"/>
</dbReference>
<dbReference type="FunFam" id="1.10.10.10:FF:000029">
    <property type="entry name" value="Proliferation-associated 2G4, a"/>
    <property type="match status" value="1"/>
</dbReference>
<dbReference type="Gene3D" id="3.90.230.10">
    <property type="entry name" value="Creatinase/methionine aminopeptidase superfamily"/>
    <property type="match status" value="1"/>
</dbReference>
<dbReference type="Gene3D" id="1.10.10.10">
    <property type="entry name" value="Winged helix-like DNA-binding domain superfamily/Winged helix DNA-binding domain"/>
    <property type="match status" value="1"/>
</dbReference>
<dbReference type="InterPro" id="IPR036005">
    <property type="entry name" value="Creatinase/aminopeptidase-like"/>
</dbReference>
<dbReference type="InterPro" id="IPR004545">
    <property type="entry name" value="PA2G4"/>
</dbReference>
<dbReference type="InterPro" id="IPR047113">
    <property type="entry name" value="PA2G4/ARX1"/>
</dbReference>
<dbReference type="InterPro" id="IPR000994">
    <property type="entry name" value="Pept_M24"/>
</dbReference>
<dbReference type="InterPro" id="IPR001714">
    <property type="entry name" value="Pept_M24_MAP"/>
</dbReference>
<dbReference type="InterPro" id="IPR036388">
    <property type="entry name" value="WH-like_DNA-bd_sf"/>
</dbReference>
<dbReference type="InterPro" id="IPR036390">
    <property type="entry name" value="WH_DNA-bd_sf"/>
</dbReference>
<dbReference type="NCBIfam" id="TIGR00495">
    <property type="entry name" value="crvDNA_42K"/>
    <property type="match status" value="1"/>
</dbReference>
<dbReference type="PANTHER" id="PTHR10804:SF11">
    <property type="entry name" value="PROLIFERATION-ASSOCIATED PROTEIN 2G4"/>
    <property type="match status" value="1"/>
</dbReference>
<dbReference type="PANTHER" id="PTHR10804">
    <property type="entry name" value="PROTEASE FAMILY M24 METHIONYL AMINOPEPTIDASE, AMINOPEPTIDASE P"/>
    <property type="match status" value="1"/>
</dbReference>
<dbReference type="Pfam" id="PF00557">
    <property type="entry name" value="Peptidase_M24"/>
    <property type="match status" value="1"/>
</dbReference>
<dbReference type="PRINTS" id="PR00599">
    <property type="entry name" value="MAPEPTIDASE"/>
</dbReference>
<dbReference type="SUPFAM" id="SSF55920">
    <property type="entry name" value="Creatinase/aminopeptidase"/>
    <property type="match status" value="1"/>
</dbReference>
<dbReference type="SUPFAM" id="SSF46785">
    <property type="entry name" value="Winged helix' DNA-binding domain"/>
    <property type="match status" value="1"/>
</dbReference>
<sequence>MSDDEREEKELDLTSPEVVTKYKSAAEIVNKALQLVLSECKPKAKIVDLCEKGDAFIKEQTGNMYKNVKKKIERGVAFPTCISVNNTVCHFSPLASDETVVEEGDILKIDMGCHIDGFIAVVGHTHVLHEGPVTGRAADVIAATNTAAEVALRLVRPGKKNSDVTEAIQKVAAAYDCKIVEGVLSHQMKQFVIDGNKVVLSVSNPDTRVDEAEFEENEVYSIDIVTSTGDGKPKLLDEKQTTIYKRAVDKSYNLKMKASRFIFSEISQKFPIMPFTARDLEEKRARLGLVECVNHELLQPYPVLHEKPGDLVAHIKFTVLLMPNGSDRVTSHALQELQPTKTTENEPEIKAWLALPTKTKKKGGGKKKKGKKGDKVEEASQAEPMEG</sequence>
<evidence type="ECO:0000250" key="1">
    <source>
        <dbReference type="UniProtKB" id="P50580"/>
    </source>
</evidence>
<evidence type="ECO:0000250" key="2">
    <source>
        <dbReference type="UniProtKB" id="Q96327"/>
    </source>
</evidence>
<evidence type="ECO:0000250" key="3">
    <source>
        <dbReference type="UniProtKB" id="Q9UQ80"/>
    </source>
</evidence>
<evidence type="ECO:0000255" key="4">
    <source>
        <dbReference type="PROSITE-ProRule" id="PRU00768"/>
    </source>
</evidence>
<evidence type="ECO:0000256" key="5">
    <source>
        <dbReference type="SAM" id="MobiDB-lite"/>
    </source>
</evidence>
<evidence type="ECO:0000269" key="6">
    <source>
    </source>
</evidence>
<evidence type="ECO:0000303" key="7">
    <source>
    </source>
</evidence>
<evidence type="ECO:0000305" key="8"/>
<evidence type="ECO:0000312" key="9">
    <source>
        <dbReference type="EnsemblPlants" id="PGSC0003DMT400078068"/>
    </source>
</evidence>
<evidence type="ECO:0000312" key="10">
    <source>
        <dbReference type="Proteomes" id="UP000011115"/>
    </source>
</evidence>
<reference key="1">
    <citation type="journal article" date="2006" name="EMBO J.">
        <title>EBP1 regulates organ size through cell growth and proliferation in plants.</title>
        <authorList>
            <person name="Horvath B.M."/>
            <person name="Magyar Z."/>
            <person name="Zhang Y."/>
            <person name="Hamburger A.W."/>
            <person name="Bako L."/>
            <person name="Visser R.G.F."/>
            <person name="Bachem C.W.B."/>
            <person name="Boegre L."/>
        </authorList>
    </citation>
    <scope>NUCLEOTIDE SEQUENCE [MRNA]</scope>
    <scope>FUNCTION</scope>
    <scope>DISRUPTION PHENOTYPE</scope>
    <scope>TISSUE SPECIFICITY</scope>
    <scope>DEVELOPMENTAL STAGE</scope>
    <source>
        <strain>cv. Karnico</strain>
    </source>
</reference>
<reference key="2">
    <citation type="journal article" date="2011" name="Nature">
        <title>Genome sequence and analysis of the tuber crop potato.</title>
        <authorList>
            <consortium name="The Potato Genome Sequencing Consortium"/>
        </authorList>
    </citation>
    <scope>NUCLEOTIDE SEQUENCE [LARGE SCALE GENOMIC DNA]</scope>
    <source>
        <strain>cv. DM1-3 516 R44</strain>
    </source>
</reference>
<organism evidence="10">
    <name type="scientific">Solanum tuberosum</name>
    <name type="common">Potato</name>
    <dbReference type="NCBI Taxonomy" id="4113"/>
    <lineage>
        <taxon>Eukaryota</taxon>
        <taxon>Viridiplantae</taxon>
        <taxon>Streptophyta</taxon>
        <taxon>Embryophyta</taxon>
        <taxon>Tracheophyta</taxon>
        <taxon>Spermatophyta</taxon>
        <taxon>Magnoliopsida</taxon>
        <taxon>eudicotyledons</taxon>
        <taxon>Gunneridae</taxon>
        <taxon>Pentapetalae</taxon>
        <taxon>asterids</taxon>
        <taxon>lamiids</taxon>
        <taxon>Solanales</taxon>
        <taxon>Solanaceae</taxon>
        <taxon>Solanoideae</taxon>
        <taxon>Solaneae</taxon>
        <taxon>Solanum</taxon>
    </lineage>
</organism>
<protein>
    <recommendedName>
        <fullName evidence="7">ERBB-3 BINDING PROTEIN 1</fullName>
        <shortName evidence="7">StEBP1</shortName>
    </recommendedName>
</protein>
<feature type="chain" id="PRO_0000432962" description="ERBB-3 BINDING PROTEIN 1">
    <location>
        <begin position="1"/>
        <end position="387"/>
    </location>
</feature>
<feature type="region of interest" description="Necessary for nucleolar localization" evidence="3">
    <location>
        <begin position="1"/>
        <end position="49"/>
    </location>
</feature>
<feature type="region of interest" description="RNA-binding" evidence="3">
    <location>
        <begin position="47"/>
        <end position="55"/>
    </location>
</feature>
<feature type="region of interest" description="Necessary for nucleolar localization" evidence="3">
    <location>
        <begin position="297"/>
        <end position="387"/>
    </location>
</feature>
<feature type="region of interest" description="Disordered" evidence="5">
    <location>
        <begin position="337"/>
        <end position="387"/>
    </location>
</feature>
<feature type="region of interest" description="Interaction with RNA" evidence="1">
    <location>
        <begin position="356"/>
        <end position="373"/>
    </location>
</feature>
<feature type="short sequence motif" description="Nuclear localization signal" evidence="4">
    <location>
        <begin position="360"/>
        <end position="369"/>
    </location>
</feature>
<feature type="compositionally biased region" description="Basic residues" evidence="5">
    <location>
        <begin position="358"/>
        <end position="372"/>
    </location>
</feature>
<feature type="sequence conflict" description="In Ref. 1; ABJ97690." evidence="8" ref="1">
    <original>A</original>
    <variation>V</variation>
    <location>
        <position position="44"/>
    </location>
</feature>
<feature type="sequence conflict" description="In Ref. 1; ABJ97690." evidence="8" ref="1">
    <original>V</original>
    <variation>I</variation>
    <location>
        <position position="100"/>
    </location>
</feature>
<feature type="sequence conflict" description="In Ref. 1; ABJ97690." evidence="8" ref="1">
    <original>T</original>
    <variation>A</variation>
    <location>
        <position position="144"/>
    </location>
</feature>
<feature type="sequence conflict" description="In Ref. 1; ABJ97690." evidence="8" ref="1">
    <original>S</original>
    <variation>N</variation>
    <location>
        <position position="267"/>
    </location>
</feature>
<keyword id="KW-0927">Auxin signaling pathway</keyword>
<keyword id="KW-0217">Developmental protein</keyword>
<keyword id="KW-0539">Nucleus</keyword>
<keyword id="KW-1185">Reference proteome</keyword>
<keyword id="KW-0687">Ribonucleoprotein</keyword>
<keyword id="KW-0694">RNA-binding</keyword>
<keyword id="KW-0698">rRNA processing</keyword>
<comment type="function">
    <text evidence="3 6">Binds RNA. Associates with 28S, 18S and 5.8S mature rRNAs, several rRNA precursors and probably U3 small nucleolar RNA. May be involved in regulation of intermediate and late steps of rRNA processing. May be involved in ribosome assembly (By similarity). Required for expression of cell cycle genes such as CYCD3-1, RNR2A and CDKB1-1. Promotes, in a dose- and auxin-dependent manner, organ growth by stimulating both cell proliferation and expansion, via the regulation of RBR1 levels (PubMed:17024182).</text>
</comment>
<comment type="subunit">
    <text evidence="3">Component of a ribonucleoprotein complex.</text>
</comment>
<comment type="subcellular location">
    <subcellularLocation>
        <location evidence="2 4">Nucleus</location>
    </subcellularLocation>
</comment>
<comment type="tissue specificity">
    <text evidence="6">Expressed during tuberisation and in roots, nodes, internodes, petioles, leaves, stolons, tubers and sprouts.</text>
</comment>
<comment type="developmental stage">
    <text evidence="6">Expression correlated with organs growth and cell division activities.</text>
</comment>
<comment type="disruption phenotype">
    <text evidence="6">Growth retardation leading to small dwarfed plant and reduced tuber yield. Young developing leaves contains a reduced number of larger cells than controls, whereas at later stages, during expansion growth, the cell size is abnormally small.</text>
</comment>
<comment type="similarity">
    <text evidence="8">Belongs to the peptidase M24 family.</text>
</comment>
<accession>M1CZC0</accession>
<accession>A0FH76</accession>
<gene>
    <name evidence="7" type="primary">EBP1</name>
    <name evidence="9" type="ORF">PGSC0003DMG400030365</name>
</gene>
<name>EBP1_SOLTU</name>